<keyword id="KW-0007">Acetylation</keyword>
<keyword id="KW-0464">Manganese</keyword>
<keyword id="KW-0479">Metal-binding</keyword>
<keyword id="KW-0496">Mitochondrion</keyword>
<keyword id="KW-0944">Nitration</keyword>
<keyword id="KW-0560">Oxidoreductase</keyword>
<keyword id="KW-1185">Reference proteome</keyword>
<keyword id="KW-0809">Transit peptide</keyword>
<keyword id="KW-0832">Ubl conjugation</keyword>
<protein>
    <recommendedName>
        <fullName>Superoxide dismutase [Mn], mitochondrial</fullName>
        <ecNumber>1.15.1.1</ecNumber>
    </recommendedName>
    <alternativeName>
        <fullName>Mn-SOD</fullName>
    </alternativeName>
</protein>
<sequence>MLCRAACSTSRKLVPALGSLGSRQKHSLPDLQYDYGALEPYINAQIMQLHHSKHHAAYVNNLNVTEEKYQEALAKGDVTAQIALQPALKFNGGGHINHTIFWTNLSPNGGGEPKGKLLDAIKRDFGSFDKFKEKLTAVSAGVQGSGWGWLGFNKDQGRLQIVACPNQDPLQGTTGLIPLLGIDVWEHAYYLQYKNVRPDYLKAIWNVINWENVSERYMACKK</sequence>
<proteinExistence type="evidence at transcript level"/>
<organism>
    <name type="scientific">Equus caballus</name>
    <name type="common">Horse</name>
    <dbReference type="NCBI Taxonomy" id="9796"/>
    <lineage>
        <taxon>Eukaryota</taxon>
        <taxon>Metazoa</taxon>
        <taxon>Chordata</taxon>
        <taxon>Craniata</taxon>
        <taxon>Vertebrata</taxon>
        <taxon>Euteleostomi</taxon>
        <taxon>Mammalia</taxon>
        <taxon>Eutheria</taxon>
        <taxon>Laurasiatheria</taxon>
        <taxon>Perissodactyla</taxon>
        <taxon>Equidae</taxon>
        <taxon>Equus</taxon>
    </lineage>
</organism>
<evidence type="ECO:0000250" key="1"/>
<evidence type="ECO:0000250" key="2">
    <source>
        <dbReference type="UniProtKB" id="P04179"/>
    </source>
</evidence>
<evidence type="ECO:0000250" key="3">
    <source>
        <dbReference type="UniProtKB" id="P07895"/>
    </source>
</evidence>
<evidence type="ECO:0000250" key="4">
    <source>
        <dbReference type="UniProtKB" id="P09671"/>
    </source>
</evidence>
<evidence type="ECO:0000305" key="5"/>
<gene>
    <name type="primary">SOD2</name>
</gene>
<reference key="1">
    <citation type="journal article" date="1999" name="J. Vet. Med. Sci.">
        <title>The cDNA sequences of equine antioxidative enzyme genes Cu/Zn-SOD and Mn-SOD, and these expressions in equine tissues.</title>
        <authorList>
            <person name="Ishida N."/>
            <person name="Katayama Y."/>
            <person name="Sato F."/>
            <person name="Hasegawa T."/>
            <person name="Mukoyama H."/>
        </authorList>
    </citation>
    <scope>NUCLEOTIDE SEQUENCE [MRNA]</scope>
    <source>
        <tissue>Testis</tissue>
    </source>
</reference>
<feature type="transit peptide" description="Mitochondrion" evidence="1">
    <location>
        <begin position="1"/>
        <end position="24"/>
    </location>
</feature>
<feature type="chain" id="PRO_0000032868" description="Superoxide dismutase [Mn], mitochondrial">
    <location>
        <begin position="25"/>
        <end position="222"/>
    </location>
</feature>
<feature type="binding site" evidence="1">
    <location>
        <position position="50"/>
    </location>
    <ligand>
        <name>Mn(2+)</name>
        <dbReference type="ChEBI" id="CHEBI:29035"/>
    </ligand>
</feature>
<feature type="binding site" evidence="1">
    <location>
        <position position="98"/>
    </location>
    <ligand>
        <name>Mn(2+)</name>
        <dbReference type="ChEBI" id="CHEBI:29035"/>
    </ligand>
</feature>
<feature type="binding site" evidence="1">
    <location>
        <position position="183"/>
    </location>
    <ligand>
        <name>Mn(2+)</name>
        <dbReference type="ChEBI" id="CHEBI:29035"/>
    </ligand>
</feature>
<feature type="binding site" evidence="1">
    <location>
        <position position="187"/>
    </location>
    <ligand>
        <name>Mn(2+)</name>
        <dbReference type="ChEBI" id="CHEBI:29035"/>
    </ligand>
</feature>
<feature type="modified residue" description="3'-nitrotyrosine" evidence="2">
    <location>
        <position position="58"/>
    </location>
</feature>
<feature type="modified residue" description="N6-acetyllysine; alternate" evidence="2">
    <location>
        <position position="68"/>
    </location>
</feature>
<feature type="modified residue" description="N6-succinyllysine; alternate" evidence="4">
    <location>
        <position position="68"/>
    </location>
</feature>
<feature type="modified residue" description="N6-acetyllysine; alternate" evidence="4">
    <location>
        <position position="75"/>
    </location>
</feature>
<feature type="modified residue" description="N6-succinyllysine; alternate" evidence="4">
    <location>
        <position position="75"/>
    </location>
</feature>
<feature type="modified residue" description="N6-acetyllysine" evidence="4">
    <location>
        <position position="114"/>
    </location>
</feature>
<feature type="modified residue" description="N6-acetyllysine; alternate" evidence="4">
    <location>
        <position position="122"/>
    </location>
</feature>
<feature type="modified residue" description="N6-succinyllysine; alternate" evidence="4">
    <location>
        <position position="122"/>
    </location>
</feature>
<feature type="modified residue" description="N6-acetyllysine; alternate" evidence="2">
    <location>
        <position position="130"/>
    </location>
</feature>
<feature type="modified residue" description="N6-succinyllysine; alternate" evidence="4">
    <location>
        <position position="130"/>
    </location>
</feature>
<feature type="modified residue" description="N6-acetyllysine" evidence="4">
    <location>
        <position position="202"/>
    </location>
</feature>
<accession>Q9XS41</accession>
<name>SODM_HORSE</name>
<comment type="function">
    <text evidence="3">Destroys superoxide anion radicals which are normally produced within the cells and which are toxic to biological systems.</text>
</comment>
<comment type="catalytic activity">
    <reaction>
        <text>2 superoxide + 2 H(+) = H2O2 + O2</text>
        <dbReference type="Rhea" id="RHEA:20696"/>
        <dbReference type="ChEBI" id="CHEBI:15378"/>
        <dbReference type="ChEBI" id="CHEBI:15379"/>
        <dbReference type="ChEBI" id="CHEBI:16240"/>
        <dbReference type="ChEBI" id="CHEBI:18421"/>
        <dbReference type="EC" id="1.15.1.1"/>
    </reaction>
</comment>
<comment type="cofactor">
    <cofactor evidence="2">
        <name>Mn(2+)</name>
        <dbReference type="ChEBI" id="CHEBI:29035"/>
    </cofactor>
    <text evidence="2">Binds 1 Mn(2+) ion per subunit.</text>
</comment>
<comment type="subunit">
    <text evidence="1">Homotetramer.</text>
</comment>
<comment type="subcellular location">
    <subcellularLocation>
        <location>Mitochondrion matrix</location>
    </subcellularLocation>
</comment>
<comment type="PTM">
    <text evidence="3">Nitrated under oxidative stress. Nitration coupled with oxidation inhibits the catalytic activity.</text>
</comment>
<comment type="PTM">
    <text evidence="2">Acetylation at Lys-122 decreases enzymatic activity. Deacetylated by SIRT3 upon exposure to ionizing radiations or after long fasting (By similarity).</text>
</comment>
<comment type="PTM">
    <text evidence="2">Polyubiquitinated; leading to proteasomal degradation. Deubiquitinated by USP36 which increases protein stability.</text>
</comment>
<comment type="similarity">
    <text evidence="5">Belongs to the iron/manganese superoxide dismutase family.</text>
</comment>
<dbReference type="EC" id="1.15.1.1"/>
<dbReference type="EMBL" id="AB001693">
    <property type="protein sequence ID" value="BAA76922.1"/>
    <property type="molecule type" value="mRNA"/>
</dbReference>
<dbReference type="RefSeq" id="NP_001075986.1">
    <property type="nucleotide sequence ID" value="NM_001082517.2"/>
</dbReference>
<dbReference type="SMR" id="Q9XS41"/>
<dbReference type="FunCoup" id="Q9XS41">
    <property type="interactions" value="1061"/>
</dbReference>
<dbReference type="STRING" id="9796.ENSECAP00000009823"/>
<dbReference type="PaxDb" id="9796-ENSECAP00000009823"/>
<dbReference type="PeptideAtlas" id="Q9XS41"/>
<dbReference type="GeneID" id="100034223"/>
<dbReference type="KEGG" id="ecb:100034223"/>
<dbReference type="CTD" id="6648"/>
<dbReference type="InParanoid" id="Q9XS41"/>
<dbReference type="OrthoDB" id="239262at2759"/>
<dbReference type="Proteomes" id="UP000002281">
    <property type="component" value="Unplaced"/>
</dbReference>
<dbReference type="GO" id="GO:0005759">
    <property type="term" value="C:mitochondrial matrix"/>
    <property type="evidence" value="ECO:0007669"/>
    <property type="project" value="UniProtKB-SubCell"/>
</dbReference>
<dbReference type="GO" id="GO:0005739">
    <property type="term" value="C:mitochondrion"/>
    <property type="evidence" value="ECO:0000318"/>
    <property type="project" value="GO_Central"/>
</dbReference>
<dbReference type="GO" id="GO:0030145">
    <property type="term" value="F:manganese ion binding"/>
    <property type="evidence" value="ECO:0000250"/>
    <property type="project" value="UniProtKB"/>
</dbReference>
<dbReference type="GO" id="GO:0004784">
    <property type="term" value="F:superoxide dismutase activity"/>
    <property type="evidence" value="ECO:0000250"/>
    <property type="project" value="UniProtKB"/>
</dbReference>
<dbReference type="GO" id="GO:0034599">
    <property type="term" value="P:cellular response to oxidative stress"/>
    <property type="evidence" value="ECO:0000250"/>
    <property type="project" value="UniProtKB"/>
</dbReference>
<dbReference type="GO" id="GO:0006357">
    <property type="term" value="P:regulation of transcription by RNA polymerase II"/>
    <property type="evidence" value="ECO:0000250"/>
    <property type="project" value="UniProtKB"/>
</dbReference>
<dbReference type="GO" id="GO:0006801">
    <property type="term" value="P:superoxide metabolic process"/>
    <property type="evidence" value="ECO:0000250"/>
    <property type="project" value="UniProtKB"/>
</dbReference>
<dbReference type="FunFam" id="1.10.287.990:FF:000001">
    <property type="entry name" value="Superoxide dismutase"/>
    <property type="match status" value="1"/>
</dbReference>
<dbReference type="FunFam" id="3.55.40.20:FF:000003">
    <property type="entry name" value="Superoxide dismutase [Mn], mitochondrial"/>
    <property type="match status" value="1"/>
</dbReference>
<dbReference type="Gene3D" id="1.10.287.990">
    <property type="entry name" value="Fe,Mn superoxide dismutase (SOD) domain"/>
    <property type="match status" value="1"/>
</dbReference>
<dbReference type="Gene3D" id="3.55.40.20">
    <property type="entry name" value="Iron/manganese superoxide dismutase, C-terminal domain"/>
    <property type="match status" value="1"/>
</dbReference>
<dbReference type="InterPro" id="IPR050265">
    <property type="entry name" value="Fe/Mn_Superoxide_Dismutase"/>
</dbReference>
<dbReference type="InterPro" id="IPR001189">
    <property type="entry name" value="Mn/Fe_SOD"/>
</dbReference>
<dbReference type="InterPro" id="IPR019833">
    <property type="entry name" value="Mn/Fe_SOD_BS"/>
</dbReference>
<dbReference type="InterPro" id="IPR019832">
    <property type="entry name" value="Mn/Fe_SOD_C"/>
</dbReference>
<dbReference type="InterPro" id="IPR019831">
    <property type="entry name" value="Mn/Fe_SOD_N"/>
</dbReference>
<dbReference type="InterPro" id="IPR036324">
    <property type="entry name" value="Mn/Fe_SOD_N_sf"/>
</dbReference>
<dbReference type="InterPro" id="IPR036314">
    <property type="entry name" value="SOD_C_sf"/>
</dbReference>
<dbReference type="PANTHER" id="PTHR11404">
    <property type="entry name" value="SUPEROXIDE DISMUTASE 2"/>
    <property type="match status" value="1"/>
</dbReference>
<dbReference type="PANTHER" id="PTHR11404:SF6">
    <property type="entry name" value="SUPEROXIDE DISMUTASE [MN], MITOCHONDRIAL"/>
    <property type="match status" value="1"/>
</dbReference>
<dbReference type="Pfam" id="PF02777">
    <property type="entry name" value="Sod_Fe_C"/>
    <property type="match status" value="1"/>
</dbReference>
<dbReference type="Pfam" id="PF00081">
    <property type="entry name" value="Sod_Fe_N"/>
    <property type="match status" value="1"/>
</dbReference>
<dbReference type="PIRSF" id="PIRSF000349">
    <property type="entry name" value="SODismutase"/>
    <property type="match status" value="1"/>
</dbReference>
<dbReference type="PRINTS" id="PR01703">
    <property type="entry name" value="MNSODISMTASE"/>
</dbReference>
<dbReference type="SUPFAM" id="SSF54719">
    <property type="entry name" value="Fe,Mn superoxide dismutase (SOD), C-terminal domain"/>
    <property type="match status" value="1"/>
</dbReference>
<dbReference type="SUPFAM" id="SSF46609">
    <property type="entry name" value="Fe,Mn superoxide dismutase (SOD), N-terminal domain"/>
    <property type="match status" value="1"/>
</dbReference>
<dbReference type="PROSITE" id="PS00088">
    <property type="entry name" value="SOD_MN"/>
    <property type="match status" value="1"/>
</dbReference>